<organism>
    <name type="scientific">Shigella flexneri</name>
    <dbReference type="NCBI Taxonomy" id="623"/>
    <lineage>
        <taxon>Bacteria</taxon>
        <taxon>Pseudomonadati</taxon>
        <taxon>Pseudomonadota</taxon>
        <taxon>Gammaproteobacteria</taxon>
        <taxon>Enterobacterales</taxon>
        <taxon>Enterobacteriaceae</taxon>
        <taxon>Shigella</taxon>
    </lineage>
</organism>
<protein>
    <recommendedName>
        <fullName evidence="1">2-dehydropantoate 2-reductase</fullName>
        <ecNumber evidence="1">1.1.1.169</ecNumber>
    </recommendedName>
    <alternativeName>
        <fullName evidence="1">Ketopantoate reductase</fullName>
        <shortName evidence="1">KPR</shortName>
    </alternativeName>
</protein>
<sequence length="303" mass="33871">MKITVLGCGALGQLWLTALCKQGHEVQGWLRVPQPYCSVNLVETDGSIFNESLTANDPDFLATSDLLLVTLKAWQVSDAVKSLASTLPVTTPILLIHNGMGTIEELQNIQQPLLMGTTTHAARRDGNVIIHVANGITHIGPARQQDGDYSYLADILQTVLPDVAWHNNIRAELWRKLAVNCVINPLTAIWNCPNGELRHHPQEIMQICEEVAAVIEREGHHTSAEDLRDYVMQVIDATAENISSMLQDIRALRHTEIDYINGFLLRRARAHGIAVPENTRLFEMVKRKESEYERIGTGLPRPW</sequence>
<keyword id="KW-0963">Cytoplasm</keyword>
<keyword id="KW-0521">NADP</keyword>
<keyword id="KW-0560">Oxidoreductase</keyword>
<keyword id="KW-0566">Pantothenate biosynthesis</keyword>
<keyword id="KW-1185">Reference proteome</keyword>
<evidence type="ECO:0000250" key="1">
    <source>
        <dbReference type="UniProtKB" id="P0A9J4"/>
    </source>
</evidence>
<evidence type="ECO:0000305" key="2"/>
<dbReference type="EC" id="1.1.1.169" evidence="1"/>
<dbReference type="EMBL" id="AE005674">
    <property type="protein sequence ID" value="AAN42020.1"/>
    <property type="molecule type" value="Genomic_DNA"/>
</dbReference>
<dbReference type="EMBL" id="AE014073">
    <property type="protein sequence ID" value="AAP15896.1"/>
    <property type="molecule type" value="Genomic_DNA"/>
</dbReference>
<dbReference type="RefSeq" id="NP_706313.1">
    <property type="nucleotide sequence ID" value="NC_004337.2"/>
</dbReference>
<dbReference type="RefSeq" id="WP_000705865.1">
    <property type="nucleotide sequence ID" value="NZ_WPGW01000023.1"/>
</dbReference>
<dbReference type="BMRB" id="P0A9J5"/>
<dbReference type="SMR" id="P0A9J5"/>
<dbReference type="STRING" id="198214.SF0362"/>
<dbReference type="PaxDb" id="198214-SF0362"/>
<dbReference type="GeneID" id="1027702"/>
<dbReference type="GeneID" id="93777035"/>
<dbReference type="KEGG" id="sfl:SF0362"/>
<dbReference type="KEGG" id="sfx:S0370"/>
<dbReference type="PATRIC" id="fig|198214.7.peg.415"/>
<dbReference type="HOGENOM" id="CLU_031468_0_1_6"/>
<dbReference type="UniPathway" id="UPA00028">
    <property type="reaction ID" value="UER00004"/>
</dbReference>
<dbReference type="Proteomes" id="UP000001006">
    <property type="component" value="Chromosome"/>
</dbReference>
<dbReference type="Proteomes" id="UP000002673">
    <property type="component" value="Chromosome"/>
</dbReference>
<dbReference type="GO" id="GO:0005737">
    <property type="term" value="C:cytoplasm"/>
    <property type="evidence" value="ECO:0007669"/>
    <property type="project" value="UniProtKB-SubCell"/>
</dbReference>
<dbReference type="GO" id="GO:0008677">
    <property type="term" value="F:2-dehydropantoate 2-reductase activity"/>
    <property type="evidence" value="ECO:0007669"/>
    <property type="project" value="UniProtKB-EC"/>
</dbReference>
<dbReference type="GO" id="GO:0050661">
    <property type="term" value="F:NADP binding"/>
    <property type="evidence" value="ECO:0007669"/>
    <property type="project" value="TreeGrafter"/>
</dbReference>
<dbReference type="GO" id="GO:0015940">
    <property type="term" value="P:pantothenate biosynthetic process"/>
    <property type="evidence" value="ECO:0007669"/>
    <property type="project" value="UniProtKB-UniPathway"/>
</dbReference>
<dbReference type="FunFam" id="1.10.1040.10:FF:000014">
    <property type="entry name" value="2-dehydropantoate 2-reductase"/>
    <property type="match status" value="1"/>
</dbReference>
<dbReference type="FunFam" id="3.40.50.720:FF:000162">
    <property type="entry name" value="2-dehydropantoate 2-reductase"/>
    <property type="match status" value="1"/>
</dbReference>
<dbReference type="Gene3D" id="1.10.1040.10">
    <property type="entry name" value="N-(1-d-carboxylethyl)-l-norvaline Dehydrogenase, domain 2"/>
    <property type="match status" value="1"/>
</dbReference>
<dbReference type="Gene3D" id="3.40.50.720">
    <property type="entry name" value="NAD(P)-binding Rossmann-like Domain"/>
    <property type="match status" value="1"/>
</dbReference>
<dbReference type="InterPro" id="IPR008927">
    <property type="entry name" value="6-PGluconate_DH-like_C_sf"/>
</dbReference>
<dbReference type="InterPro" id="IPR013328">
    <property type="entry name" value="6PGD_dom2"/>
</dbReference>
<dbReference type="InterPro" id="IPR003710">
    <property type="entry name" value="ApbA"/>
</dbReference>
<dbReference type="InterPro" id="IPR050838">
    <property type="entry name" value="Ketopantoate_reductase"/>
</dbReference>
<dbReference type="InterPro" id="IPR013752">
    <property type="entry name" value="KPA_reductase"/>
</dbReference>
<dbReference type="InterPro" id="IPR013332">
    <property type="entry name" value="KPR_N"/>
</dbReference>
<dbReference type="InterPro" id="IPR036291">
    <property type="entry name" value="NAD(P)-bd_dom_sf"/>
</dbReference>
<dbReference type="NCBIfam" id="TIGR00745">
    <property type="entry name" value="apbA_panE"/>
    <property type="match status" value="1"/>
</dbReference>
<dbReference type="NCBIfam" id="NF005087">
    <property type="entry name" value="PRK06522.1-1"/>
    <property type="match status" value="1"/>
</dbReference>
<dbReference type="PANTHER" id="PTHR43765:SF2">
    <property type="entry name" value="2-DEHYDROPANTOATE 2-REDUCTASE"/>
    <property type="match status" value="1"/>
</dbReference>
<dbReference type="PANTHER" id="PTHR43765">
    <property type="entry name" value="2-DEHYDROPANTOATE 2-REDUCTASE-RELATED"/>
    <property type="match status" value="1"/>
</dbReference>
<dbReference type="Pfam" id="PF02558">
    <property type="entry name" value="ApbA"/>
    <property type="match status" value="1"/>
</dbReference>
<dbReference type="Pfam" id="PF08546">
    <property type="entry name" value="ApbA_C"/>
    <property type="match status" value="1"/>
</dbReference>
<dbReference type="SUPFAM" id="SSF48179">
    <property type="entry name" value="6-phosphogluconate dehydrogenase C-terminal domain-like"/>
    <property type="match status" value="1"/>
</dbReference>
<dbReference type="SUPFAM" id="SSF51735">
    <property type="entry name" value="NAD(P)-binding Rossmann-fold domains"/>
    <property type="match status" value="1"/>
</dbReference>
<name>PANE_SHIFL</name>
<accession>P0A9J5</accession>
<accession>P77728</accession>
<accession>Q46947</accession>
<reference key="1">
    <citation type="journal article" date="2002" name="Nucleic Acids Res.">
        <title>Genome sequence of Shigella flexneri 2a: insights into pathogenicity through comparison with genomes of Escherichia coli K12 and O157.</title>
        <authorList>
            <person name="Jin Q."/>
            <person name="Yuan Z."/>
            <person name="Xu J."/>
            <person name="Wang Y."/>
            <person name="Shen Y."/>
            <person name="Lu W."/>
            <person name="Wang J."/>
            <person name="Liu H."/>
            <person name="Yang J."/>
            <person name="Yang F."/>
            <person name="Zhang X."/>
            <person name="Zhang J."/>
            <person name="Yang G."/>
            <person name="Wu H."/>
            <person name="Qu D."/>
            <person name="Dong J."/>
            <person name="Sun L."/>
            <person name="Xue Y."/>
            <person name="Zhao A."/>
            <person name="Gao Y."/>
            <person name="Zhu J."/>
            <person name="Kan B."/>
            <person name="Ding K."/>
            <person name="Chen S."/>
            <person name="Cheng H."/>
            <person name="Yao Z."/>
            <person name="He B."/>
            <person name="Chen R."/>
            <person name="Ma D."/>
            <person name="Qiang B."/>
            <person name="Wen Y."/>
            <person name="Hou Y."/>
            <person name="Yu J."/>
        </authorList>
    </citation>
    <scope>NUCLEOTIDE SEQUENCE [LARGE SCALE GENOMIC DNA]</scope>
    <source>
        <strain>301 / Serotype 2a</strain>
    </source>
</reference>
<reference key="2">
    <citation type="journal article" date="2003" name="Infect. Immun.">
        <title>Complete genome sequence and comparative genomics of Shigella flexneri serotype 2a strain 2457T.</title>
        <authorList>
            <person name="Wei J."/>
            <person name="Goldberg M.B."/>
            <person name="Burland V."/>
            <person name="Venkatesan M.M."/>
            <person name="Deng W."/>
            <person name="Fournier G."/>
            <person name="Mayhew G.F."/>
            <person name="Plunkett G. III"/>
            <person name="Rose D.J."/>
            <person name="Darling A."/>
            <person name="Mau B."/>
            <person name="Perna N.T."/>
            <person name="Payne S.M."/>
            <person name="Runyen-Janecky L.J."/>
            <person name="Zhou S."/>
            <person name="Schwartz D.C."/>
            <person name="Blattner F.R."/>
        </authorList>
    </citation>
    <scope>NUCLEOTIDE SEQUENCE [LARGE SCALE GENOMIC DNA]</scope>
    <source>
        <strain>ATCC 700930 / 2457T / Serotype 2a</strain>
    </source>
</reference>
<gene>
    <name type="primary">panE</name>
    <name type="synonym">apbA</name>
    <name type="ordered locus">SF0362</name>
    <name type="ordered locus">S0370</name>
</gene>
<proteinExistence type="inferred from homology"/>
<comment type="function">
    <text evidence="1">Catalyzes the NADPH-dependent reduction of ketopantoate into pantoic acid.</text>
</comment>
<comment type="catalytic activity">
    <reaction evidence="1">
        <text>(R)-pantoate + NADP(+) = 2-dehydropantoate + NADPH + H(+)</text>
        <dbReference type="Rhea" id="RHEA:16233"/>
        <dbReference type="ChEBI" id="CHEBI:11561"/>
        <dbReference type="ChEBI" id="CHEBI:15378"/>
        <dbReference type="ChEBI" id="CHEBI:15980"/>
        <dbReference type="ChEBI" id="CHEBI:57783"/>
        <dbReference type="ChEBI" id="CHEBI:58349"/>
        <dbReference type="EC" id="1.1.1.169"/>
    </reaction>
</comment>
<comment type="pathway">
    <text evidence="1">Cofactor biosynthesis; (R)-pantothenate biosynthesis; (R)-pantoate from 3-methyl-2-oxobutanoate: step 2/2.</text>
</comment>
<comment type="subunit">
    <text evidence="1">Monomer.</text>
</comment>
<comment type="subcellular location">
    <subcellularLocation>
        <location evidence="1">Cytoplasm</location>
    </subcellularLocation>
</comment>
<comment type="similarity">
    <text evidence="2">Belongs to the ketopantoate reductase family.</text>
</comment>
<feature type="chain" id="PRO_0000157305" description="2-dehydropantoate 2-reductase">
    <location>
        <begin position="1"/>
        <end position="303"/>
    </location>
</feature>
<feature type="active site" description="Proton donor" evidence="1">
    <location>
        <position position="176"/>
    </location>
</feature>
<feature type="binding site" evidence="1">
    <location>
        <begin position="7"/>
        <end position="12"/>
    </location>
    <ligand>
        <name>NADP(+)</name>
        <dbReference type="ChEBI" id="CHEBI:58349"/>
    </ligand>
</feature>
<feature type="binding site" evidence="1">
    <location>
        <position position="98"/>
    </location>
    <ligand>
        <name>NADP(+)</name>
        <dbReference type="ChEBI" id="CHEBI:58349"/>
    </ligand>
</feature>
<feature type="binding site" evidence="1">
    <location>
        <position position="98"/>
    </location>
    <ligand>
        <name>substrate</name>
    </ligand>
</feature>
<feature type="binding site" evidence="1">
    <location>
        <position position="122"/>
    </location>
    <ligand>
        <name>NADP(+)</name>
        <dbReference type="ChEBI" id="CHEBI:58349"/>
    </ligand>
</feature>
<feature type="binding site" evidence="1">
    <location>
        <position position="180"/>
    </location>
    <ligand>
        <name>substrate</name>
    </ligand>
</feature>
<feature type="binding site" evidence="1">
    <location>
        <position position="184"/>
    </location>
    <ligand>
        <name>substrate</name>
    </ligand>
</feature>
<feature type="binding site" evidence="1">
    <location>
        <position position="194"/>
    </location>
    <ligand>
        <name>substrate</name>
    </ligand>
</feature>
<feature type="binding site" evidence="1">
    <location>
        <position position="244"/>
    </location>
    <ligand>
        <name>substrate</name>
    </ligand>
</feature>
<feature type="binding site" evidence="1">
    <location>
        <position position="256"/>
    </location>
    <ligand>
        <name>NADP(+)</name>
        <dbReference type="ChEBI" id="CHEBI:58349"/>
    </ligand>
</feature>